<protein>
    <recommendedName>
        <fullName evidence="1">Co-chaperonin GroES</fullName>
    </recommendedName>
    <alternativeName>
        <fullName evidence="1">10 kDa chaperonin</fullName>
    </alternativeName>
    <alternativeName>
        <fullName evidence="1">Chaperonin-10</fullName>
        <shortName evidence="1">Cpn10</shortName>
    </alternativeName>
</protein>
<proteinExistence type="inferred from homology"/>
<accession>P0DA24</accession>
<accession>P63771</accession>
<accession>Q99XS0</accession>
<comment type="function">
    <text evidence="1">Together with the chaperonin GroEL, plays an essential role in assisting protein folding. The GroEL-GroES system forms a nano-cage that allows encapsulation of the non-native substrate proteins and provides a physical environment optimized to promote and accelerate protein folding. GroES binds to the apical surface of the GroEL ring, thereby capping the opening of the GroEL channel.</text>
</comment>
<comment type="subunit">
    <text evidence="1">Heptamer of 7 subunits arranged in a ring. Interacts with the chaperonin GroEL.</text>
</comment>
<comment type="subcellular location">
    <subcellularLocation>
        <location evidence="1">Cytoplasm</location>
    </subcellularLocation>
</comment>
<comment type="similarity">
    <text evidence="1">Belongs to the GroES chaperonin family.</text>
</comment>
<evidence type="ECO:0000255" key="1">
    <source>
        <dbReference type="HAMAP-Rule" id="MF_00580"/>
    </source>
</evidence>
<name>CH10_STRP3</name>
<organism>
    <name type="scientific">Streptococcus pyogenes serotype M3 (strain ATCC BAA-595 / MGAS315)</name>
    <dbReference type="NCBI Taxonomy" id="198466"/>
    <lineage>
        <taxon>Bacteria</taxon>
        <taxon>Bacillati</taxon>
        <taxon>Bacillota</taxon>
        <taxon>Bacilli</taxon>
        <taxon>Lactobacillales</taxon>
        <taxon>Streptococcaceae</taxon>
        <taxon>Streptococcus</taxon>
    </lineage>
</organism>
<feature type="chain" id="PRO_0000174869" description="Co-chaperonin GroES">
    <location>
        <begin position="1"/>
        <end position="96"/>
    </location>
</feature>
<reference key="1">
    <citation type="journal article" date="2002" name="Proc. Natl. Acad. Sci. U.S.A.">
        <title>Genome sequence of a serotype M3 strain of group A Streptococcus: phage-encoded toxins, the high-virulence phenotype, and clone emergence.</title>
        <authorList>
            <person name="Beres S.B."/>
            <person name="Sylva G.L."/>
            <person name="Barbian K.D."/>
            <person name="Lei B."/>
            <person name="Hoff J.S."/>
            <person name="Mammarella N.D."/>
            <person name="Liu M.-Y."/>
            <person name="Smoot J.C."/>
            <person name="Porcella S.F."/>
            <person name="Parkins L.D."/>
            <person name="Campbell D.S."/>
            <person name="Smith T.M."/>
            <person name="McCormick J.K."/>
            <person name="Leung D.Y.M."/>
            <person name="Schlievert P.M."/>
            <person name="Musser J.M."/>
        </authorList>
    </citation>
    <scope>NUCLEOTIDE SEQUENCE [LARGE SCALE GENOMIC DNA]</scope>
    <source>
        <strain>ATCC BAA-595 / MGAS315</strain>
    </source>
</reference>
<dbReference type="EMBL" id="AE014074">
    <property type="protein sequence ID" value="AAM80373.1"/>
    <property type="molecule type" value="Genomic_DNA"/>
</dbReference>
<dbReference type="RefSeq" id="WP_002991292.1">
    <property type="nucleotide sequence ID" value="NC_004070.1"/>
</dbReference>
<dbReference type="SMR" id="P0DA24"/>
<dbReference type="GeneID" id="69901535"/>
<dbReference type="KEGG" id="spg:SpyM3_1766"/>
<dbReference type="HOGENOM" id="CLU_132825_1_2_9"/>
<dbReference type="Proteomes" id="UP000000564">
    <property type="component" value="Chromosome"/>
</dbReference>
<dbReference type="GO" id="GO:0005737">
    <property type="term" value="C:cytoplasm"/>
    <property type="evidence" value="ECO:0007669"/>
    <property type="project" value="UniProtKB-SubCell"/>
</dbReference>
<dbReference type="GO" id="GO:0005524">
    <property type="term" value="F:ATP binding"/>
    <property type="evidence" value="ECO:0007669"/>
    <property type="project" value="InterPro"/>
</dbReference>
<dbReference type="GO" id="GO:0046872">
    <property type="term" value="F:metal ion binding"/>
    <property type="evidence" value="ECO:0007669"/>
    <property type="project" value="TreeGrafter"/>
</dbReference>
<dbReference type="GO" id="GO:0044183">
    <property type="term" value="F:protein folding chaperone"/>
    <property type="evidence" value="ECO:0007669"/>
    <property type="project" value="InterPro"/>
</dbReference>
<dbReference type="GO" id="GO:0051087">
    <property type="term" value="F:protein-folding chaperone binding"/>
    <property type="evidence" value="ECO:0007669"/>
    <property type="project" value="TreeGrafter"/>
</dbReference>
<dbReference type="GO" id="GO:0051082">
    <property type="term" value="F:unfolded protein binding"/>
    <property type="evidence" value="ECO:0007669"/>
    <property type="project" value="TreeGrafter"/>
</dbReference>
<dbReference type="GO" id="GO:0051085">
    <property type="term" value="P:chaperone cofactor-dependent protein refolding"/>
    <property type="evidence" value="ECO:0007669"/>
    <property type="project" value="TreeGrafter"/>
</dbReference>
<dbReference type="CDD" id="cd00320">
    <property type="entry name" value="cpn10"/>
    <property type="match status" value="1"/>
</dbReference>
<dbReference type="FunFam" id="2.30.33.40:FF:000001">
    <property type="entry name" value="10 kDa chaperonin"/>
    <property type="match status" value="1"/>
</dbReference>
<dbReference type="Gene3D" id="2.30.33.40">
    <property type="entry name" value="GroES chaperonin"/>
    <property type="match status" value="1"/>
</dbReference>
<dbReference type="HAMAP" id="MF_00580">
    <property type="entry name" value="CH10"/>
    <property type="match status" value="1"/>
</dbReference>
<dbReference type="InterPro" id="IPR020818">
    <property type="entry name" value="Chaperonin_GroES"/>
</dbReference>
<dbReference type="InterPro" id="IPR037124">
    <property type="entry name" value="Chaperonin_GroES_sf"/>
</dbReference>
<dbReference type="InterPro" id="IPR018369">
    <property type="entry name" value="Chaprnonin_Cpn10_CS"/>
</dbReference>
<dbReference type="InterPro" id="IPR011032">
    <property type="entry name" value="GroES-like_sf"/>
</dbReference>
<dbReference type="NCBIfam" id="NF001528">
    <property type="entry name" value="PRK00364.1-4"/>
    <property type="match status" value="1"/>
</dbReference>
<dbReference type="PANTHER" id="PTHR10772">
    <property type="entry name" value="10 KDA HEAT SHOCK PROTEIN"/>
    <property type="match status" value="1"/>
</dbReference>
<dbReference type="PANTHER" id="PTHR10772:SF58">
    <property type="entry name" value="CO-CHAPERONIN GROES"/>
    <property type="match status" value="1"/>
</dbReference>
<dbReference type="Pfam" id="PF00166">
    <property type="entry name" value="Cpn10"/>
    <property type="match status" value="1"/>
</dbReference>
<dbReference type="PRINTS" id="PR00297">
    <property type="entry name" value="CHAPERONIN10"/>
</dbReference>
<dbReference type="SMART" id="SM00883">
    <property type="entry name" value="Cpn10"/>
    <property type="match status" value="1"/>
</dbReference>
<dbReference type="SUPFAM" id="SSF50129">
    <property type="entry name" value="GroES-like"/>
    <property type="match status" value="1"/>
</dbReference>
<dbReference type="PROSITE" id="PS00681">
    <property type="entry name" value="CHAPERONINS_CPN10"/>
    <property type="match status" value="1"/>
</dbReference>
<keyword id="KW-0143">Chaperone</keyword>
<keyword id="KW-0963">Cytoplasm</keyword>
<sequence>MLKPLGDRVVVRFDDEKEQTVGGFVLAGTHKESTRKATVLAVSETGVRTITGDSVLPSVSVGQEVLVENGHDLEVTVDDEKVSIIRESDIIAIVTK</sequence>
<gene>
    <name evidence="1" type="primary">groES</name>
    <name evidence="1" type="synonym">groS</name>
    <name type="ordered locus">SpyM3_1766</name>
</gene>